<keyword id="KW-0067">ATP-binding</keyword>
<keyword id="KW-0227">DNA damage</keyword>
<keyword id="KW-0234">DNA repair</keyword>
<keyword id="KW-0238">DNA-binding</keyword>
<keyword id="KW-0547">Nucleotide-binding</keyword>
<keyword id="KW-1185">Reference proteome</keyword>
<organism>
    <name type="scientific">Staphylococcus saprophyticus subsp. saprophyticus (strain ATCC 15305 / DSM 20229 / NCIMB 8711 / NCTC 7292 / S-41)</name>
    <dbReference type="NCBI Taxonomy" id="342451"/>
    <lineage>
        <taxon>Bacteria</taxon>
        <taxon>Bacillati</taxon>
        <taxon>Bacillota</taxon>
        <taxon>Bacilli</taxon>
        <taxon>Bacillales</taxon>
        <taxon>Staphylococcaceae</taxon>
        <taxon>Staphylococcus</taxon>
    </lineage>
</organism>
<sequence length="887" mass="101236">MTNQTPMMQQYLKIKSQYQDCLLFFRLGDFYEMFFEDAKVASRVLEITLTKRDAKKEDPIPMCGVPYHSADGYIETLISNGYKVAICEQMEDPRQTKGMVRREVVRIVTPGTVMDQGGVDEKQNNYILSFIQSASMYALSYCDVSTGELKVTHFEDEATLINEITTINPNEIVVKEAIGESLKRQISLTTETITVLPDISDVKYDVNTTNDSHLYHVTQLLLDYVYHTQKRDLSHIESVITYEAVDFMKMDFYAKRNLELTESIRLKSKKGTLLWLMDETKTPMGARRLKQWIDRPLIQKKQIESRLDTVDQFINHFIERDTLRGYLNQVYDIERLVGRVSYGNVNARDLIQLKHSISEIPNIKNLLQAFDEQMTAQFEALEPLDDLLNLLEESLKEEPPISVKEGGLFKTGFNETLDSYLEASKNGKNWLAELQTKERQRTGIKSLKISFNKVFGYFIEITRANLQGFDPTEFGYHRKQTLSNAERFITDELKEKEDIILGAEDKAIELEYQLFVQLREQIKAYTERLQKQAKVISELDCLQSFAEIAQKYNYARPTFSEDKTLELVNSRHPVVERVMDHNDYVPNDCELDKETFIYLITGPNMSGKSTYMRQVAIISIMAQMGAYVPCESAILPVFDQIFTRIGAADDLVSGKSTFMVEMLEAQKALAHATEHSLIIFDEIGRGTSTYDGLALAQAMIEYVAHTSHAKTLFSTHYHELTTLDQSLACLKNVHVAANEYNGELIFLHKVKDGAVDDSYGIQVAKLAHLPVEVINRVQVILDAFEQSNNQTNNKNTMNHVDIPTDKNLNASSDEVTEIKATYYVDNEQSAATQHAKSDGQFEQAAFDLFDSPAKQSEIENEIKTLNLSNMTPIEALVKLSELQKQLK</sequence>
<accession>Q49X88</accession>
<protein>
    <recommendedName>
        <fullName evidence="1">DNA mismatch repair protein MutS</fullName>
    </recommendedName>
</protein>
<reference key="1">
    <citation type="journal article" date="2005" name="Proc. Natl. Acad. Sci. U.S.A.">
        <title>Whole genome sequence of Staphylococcus saprophyticus reveals the pathogenesis of uncomplicated urinary tract infection.</title>
        <authorList>
            <person name="Kuroda M."/>
            <person name="Yamashita A."/>
            <person name="Hirakawa H."/>
            <person name="Kumano M."/>
            <person name="Morikawa K."/>
            <person name="Higashide M."/>
            <person name="Maruyama A."/>
            <person name="Inose Y."/>
            <person name="Matoba K."/>
            <person name="Toh H."/>
            <person name="Kuhara S."/>
            <person name="Hattori M."/>
            <person name="Ohta T."/>
        </authorList>
    </citation>
    <scope>NUCLEOTIDE SEQUENCE [LARGE SCALE GENOMIC DNA]</scope>
    <source>
        <strain>ATCC 15305 / DSM 20229 / NCIMB 8711 / NCTC 7292 / S-41</strain>
    </source>
</reference>
<comment type="function">
    <text evidence="1">This protein is involved in the repair of mismatches in DNA. It is possible that it carries out the mismatch recognition step. This protein has a weak ATPase activity.</text>
</comment>
<comment type="similarity">
    <text evidence="1">Belongs to the DNA mismatch repair MutS family.</text>
</comment>
<proteinExistence type="inferred from homology"/>
<name>MUTS_STAS1</name>
<feature type="chain" id="PRO_0000224408" description="DNA mismatch repair protein MutS">
    <location>
        <begin position="1"/>
        <end position="887"/>
    </location>
</feature>
<feature type="binding site" evidence="1">
    <location>
        <begin position="602"/>
        <end position="609"/>
    </location>
    <ligand>
        <name>ATP</name>
        <dbReference type="ChEBI" id="CHEBI:30616"/>
    </ligand>
</feature>
<gene>
    <name evidence="1" type="primary">mutS</name>
    <name type="ordered locus">SSP1465</name>
</gene>
<evidence type="ECO:0000255" key="1">
    <source>
        <dbReference type="HAMAP-Rule" id="MF_00096"/>
    </source>
</evidence>
<dbReference type="EMBL" id="AP008934">
    <property type="protein sequence ID" value="BAE18610.1"/>
    <property type="molecule type" value="Genomic_DNA"/>
</dbReference>
<dbReference type="RefSeq" id="WP_011303232.1">
    <property type="nucleotide sequence ID" value="NC_007350.1"/>
</dbReference>
<dbReference type="SMR" id="Q49X88"/>
<dbReference type="GeneID" id="3615092"/>
<dbReference type="KEGG" id="ssp:SSP1465"/>
<dbReference type="PATRIC" id="fig|342451.11.peg.1469"/>
<dbReference type="eggNOG" id="COG0249">
    <property type="taxonomic scope" value="Bacteria"/>
</dbReference>
<dbReference type="HOGENOM" id="CLU_002472_3_1_9"/>
<dbReference type="OrthoDB" id="9802448at2"/>
<dbReference type="Proteomes" id="UP000006371">
    <property type="component" value="Chromosome"/>
</dbReference>
<dbReference type="GO" id="GO:0005829">
    <property type="term" value="C:cytosol"/>
    <property type="evidence" value="ECO:0007669"/>
    <property type="project" value="TreeGrafter"/>
</dbReference>
<dbReference type="GO" id="GO:0005524">
    <property type="term" value="F:ATP binding"/>
    <property type="evidence" value="ECO:0007669"/>
    <property type="project" value="UniProtKB-UniRule"/>
</dbReference>
<dbReference type="GO" id="GO:0140664">
    <property type="term" value="F:ATP-dependent DNA damage sensor activity"/>
    <property type="evidence" value="ECO:0007669"/>
    <property type="project" value="InterPro"/>
</dbReference>
<dbReference type="GO" id="GO:0003684">
    <property type="term" value="F:damaged DNA binding"/>
    <property type="evidence" value="ECO:0007669"/>
    <property type="project" value="UniProtKB-UniRule"/>
</dbReference>
<dbReference type="GO" id="GO:0030983">
    <property type="term" value="F:mismatched DNA binding"/>
    <property type="evidence" value="ECO:0007669"/>
    <property type="project" value="InterPro"/>
</dbReference>
<dbReference type="GO" id="GO:0006298">
    <property type="term" value="P:mismatch repair"/>
    <property type="evidence" value="ECO:0007669"/>
    <property type="project" value="UniProtKB-UniRule"/>
</dbReference>
<dbReference type="CDD" id="cd03284">
    <property type="entry name" value="ABC_MutS1"/>
    <property type="match status" value="1"/>
</dbReference>
<dbReference type="FunFam" id="1.10.1420.10:FF:000007">
    <property type="entry name" value="DNA mismatch repair protein MutS"/>
    <property type="match status" value="1"/>
</dbReference>
<dbReference type="FunFam" id="3.40.1170.10:FF:000001">
    <property type="entry name" value="DNA mismatch repair protein MutS"/>
    <property type="match status" value="1"/>
</dbReference>
<dbReference type="FunFam" id="3.40.50.300:FF:000896">
    <property type="entry name" value="DNA mismatch repair protein MutS"/>
    <property type="match status" value="1"/>
</dbReference>
<dbReference type="Gene3D" id="1.10.1420.10">
    <property type="match status" value="2"/>
</dbReference>
<dbReference type="Gene3D" id="3.40.1170.10">
    <property type="entry name" value="DNA repair protein MutS, domain I"/>
    <property type="match status" value="1"/>
</dbReference>
<dbReference type="Gene3D" id="3.30.420.110">
    <property type="entry name" value="MutS, connector domain"/>
    <property type="match status" value="1"/>
</dbReference>
<dbReference type="Gene3D" id="3.40.50.300">
    <property type="entry name" value="P-loop containing nucleotide triphosphate hydrolases"/>
    <property type="match status" value="1"/>
</dbReference>
<dbReference type="HAMAP" id="MF_00096">
    <property type="entry name" value="MutS"/>
    <property type="match status" value="1"/>
</dbReference>
<dbReference type="InterPro" id="IPR005748">
    <property type="entry name" value="DNA_mismatch_repair_MutS"/>
</dbReference>
<dbReference type="InterPro" id="IPR007695">
    <property type="entry name" value="DNA_mismatch_repair_MutS-lik_N"/>
</dbReference>
<dbReference type="InterPro" id="IPR017261">
    <property type="entry name" value="DNA_mismatch_repair_MutS/MSH"/>
</dbReference>
<dbReference type="InterPro" id="IPR000432">
    <property type="entry name" value="DNA_mismatch_repair_MutS_C"/>
</dbReference>
<dbReference type="InterPro" id="IPR007861">
    <property type="entry name" value="DNA_mismatch_repair_MutS_clamp"/>
</dbReference>
<dbReference type="InterPro" id="IPR007696">
    <property type="entry name" value="DNA_mismatch_repair_MutS_core"/>
</dbReference>
<dbReference type="InterPro" id="IPR016151">
    <property type="entry name" value="DNA_mismatch_repair_MutS_N"/>
</dbReference>
<dbReference type="InterPro" id="IPR036187">
    <property type="entry name" value="DNA_mismatch_repair_MutS_sf"/>
</dbReference>
<dbReference type="InterPro" id="IPR007860">
    <property type="entry name" value="DNA_mmatch_repair_MutS_con_dom"/>
</dbReference>
<dbReference type="InterPro" id="IPR045076">
    <property type="entry name" value="MutS"/>
</dbReference>
<dbReference type="InterPro" id="IPR036678">
    <property type="entry name" value="MutS_con_dom_sf"/>
</dbReference>
<dbReference type="InterPro" id="IPR027417">
    <property type="entry name" value="P-loop_NTPase"/>
</dbReference>
<dbReference type="NCBIfam" id="TIGR01070">
    <property type="entry name" value="mutS1"/>
    <property type="match status" value="1"/>
</dbReference>
<dbReference type="NCBIfam" id="NF003810">
    <property type="entry name" value="PRK05399.1"/>
    <property type="match status" value="1"/>
</dbReference>
<dbReference type="PANTHER" id="PTHR11361:SF34">
    <property type="entry name" value="DNA MISMATCH REPAIR PROTEIN MSH1, MITOCHONDRIAL"/>
    <property type="match status" value="1"/>
</dbReference>
<dbReference type="PANTHER" id="PTHR11361">
    <property type="entry name" value="DNA MISMATCH REPAIR PROTEIN MUTS FAMILY MEMBER"/>
    <property type="match status" value="1"/>
</dbReference>
<dbReference type="Pfam" id="PF01624">
    <property type="entry name" value="MutS_I"/>
    <property type="match status" value="1"/>
</dbReference>
<dbReference type="Pfam" id="PF05188">
    <property type="entry name" value="MutS_II"/>
    <property type="match status" value="1"/>
</dbReference>
<dbReference type="Pfam" id="PF05192">
    <property type="entry name" value="MutS_III"/>
    <property type="match status" value="1"/>
</dbReference>
<dbReference type="Pfam" id="PF05190">
    <property type="entry name" value="MutS_IV"/>
    <property type="match status" value="1"/>
</dbReference>
<dbReference type="Pfam" id="PF00488">
    <property type="entry name" value="MutS_V"/>
    <property type="match status" value="1"/>
</dbReference>
<dbReference type="PIRSF" id="PIRSF037677">
    <property type="entry name" value="DNA_mis_repair_Msh6"/>
    <property type="match status" value="1"/>
</dbReference>
<dbReference type="SMART" id="SM00534">
    <property type="entry name" value="MUTSac"/>
    <property type="match status" value="1"/>
</dbReference>
<dbReference type="SMART" id="SM00533">
    <property type="entry name" value="MUTSd"/>
    <property type="match status" value="1"/>
</dbReference>
<dbReference type="SUPFAM" id="SSF55271">
    <property type="entry name" value="DNA repair protein MutS, domain I"/>
    <property type="match status" value="1"/>
</dbReference>
<dbReference type="SUPFAM" id="SSF53150">
    <property type="entry name" value="DNA repair protein MutS, domain II"/>
    <property type="match status" value="1"/>
</dbReference>
<dbReference type="SUPFAM" id="SSF48334">
    <property type="entry name" value="DNA repair protein MutS, domain III"/>
    <property type="match status" value="1"/>
</dbReference>
<dbReference type="SUPFAM" id="SSF52540">
    <property type="entry name" value="P-loop containing nucleoside triphosphate hydrolases"/>
    <property type="match status" value="1"/>
</dbReference>
<dbReference type="PROSITE" id="PS00486">
    <property type="entry name" value="DNA_MISMATCH_REPAIR_2"/>
    <property type="match status" value="1"/>
</dbReference>